<proteinExistence type="inferred from homology"/>
<evidence type="ECO:0000250" key="1"/>
<evidence type="ECO:0000255" key="2"/>
<evidence type="ECO:0000305" key="3"/>
<reference key="1">
    <citation type="journal article" date="1995" name="Science">
        <title>Whole-genome random sequencing and assembly of Haemophilus influenzae Rd.</title>
        <authorList>
            <person name="Fleischmann R.D."/>
            <person name="Adams M.D."/>
            <person name="White O."/>
            <person name="Clayton R.A."/>
            <person name="Kirkness E.F."/>
            <person name="Kerlavage A.R."/>
            <person name="Bult C.J."/>
            <person name="Tomb J.-F."/>
            <person name="Dougherty B.A."/>
            <person name="Merrick J.M."/>
            <person name="McKenney K."/>
            <person name="Sutton G.G."/>
            <person name="FitzHugh W."/>
            <person name="Fields C.A."/>
            <person name="Gocayne J.D."/>
            <person name="Scott J.D."/>
            <person name="Shirley R."/>
            <person name="Liu L.-I."/>
            <person name="Glodek A."/>
            <person name="Kelley J.M."/>
            <person name="Weidman J.F."/>
            <person name="Phillips C.A."/>
            <person name="Spriggs T."/>
            <person name="Hedblom E."/>
            <person name="Cotton M.D."/>
            <person name="Utterback T.R."/>
            <person name="Hanna M.C."/>
            <person name="Nguyen D.T."/>
            <person name="Saudek D.M."/>
            <person name="Brandon R.C."/>
            <person name="Fine L.D."/>
            <person name="Fritchman J.L."/>
            <person name="Fuhrmann J.L."/>
            <person name="Geoghagen N.S.M."/>
            <person name="Gnehm C.L."/>
            <person name="McDonald L.A."/>
            <person name="Small K.V."/>
            <person name="Fraser C.M."/>
            <person name="Smith H.O."/>
            <person name="Venter J.C."/>
        </authorList>
    </citation>
    <scope>NUCLEOTIDE SEQUENCE [LARGE SCALE GENOMIC DNA]</scope>
    <source>
        <strain>ATCC 51907 / DSM 11121 / KW20 / Rd</strain>
    </source>
</reference>
<reference key="2">
    <citation type="journal article" date="1996" name="Gene">
        <title>Characterization of the Haemophilus influenzae topA locus: DNA topoisomerase I is required for genetic competence.</title>
        <authorList>
            <person name="Chandler M.S."/>
            <person name="Smith R.A."/>
        </authorList>
    </citation>
    <scope>NUCLEOTIDE SEQUENCE [GENOMIC DNA] OF 244-474</scope>
    <source>
        <strain>ATCC 51907 / DSM 11121 / KW20 / Rd</strain>
    </source>
</reference>
<protein>
    <recommendedName>
        <fullName>NAD(P) transhydrogenase subunit beta</fullName>
        <ecNumber>7.1.1.1</ecNumber>
    </recommendedName>
    <alternativeName>
        <fullName>Nicotinamide nucleotide transhydrogenase subunit beta</fullName>
    </alternativeName>
    <alternativeName>
        <fullName>Pyridine nucleotide transhydrogenase subunit beta</fullName>
    </alternativeName>
</protein>
<dbReference type="EC" id="7.1.1.1"/>
<dbReference type="EMBL" id="L42023">
    <property type="protein sequence ID" value="AAC23010.1"/>
    <property type="molecule type" value="Genomic_DNA"/>
</dbReference>
<dbReference type="EMBL" id="U20964">
    <property type="protein sequence ID" value="AAC43725.1"/>
    <property type="molecule type" value="Genomic_DNA"/>
</dbReference>
<dbReference type="PIR" id="F64119">
    <property type="entry name" value="F64119"/>
</dbReference>
<dbReference type="RefSeq" id="NP_439514.1">
    <property type="nucleotide sequence ID" value="NC_000907.1"/>
</dbReference>
<dbReference type="SMR" id="P43010"/>
<dbReference type="STRING" id="71421.HI_1363"/>
<dbReference type="DNASU" id="950280"/>
<dbReference type="EnsemblBacteria" id="AAC23010">
    <property type="protein sequence ID" value="AAC23010"/>
    <property type="gene ID" value="HI_1363"/>
</dbReference>
<dbReference type="KEGG" id="hin:HI_1363"/>
<dbReference type="PATRIC" id="fig|71421.8.peg.1417"/>
<dbReference type="eggNOG" id="COG1282">
    <property type="taxonomic scope" value="Bacteria"/>
</dbReference>
<dbReference type="HOGENOM" id="CLU_007866_4_0_6"/>
<dbReference type="OrthoDB" id="9763786at2"/>
<dbReference type="PhylomeDB" id="P43010"/>
<dbReference type="BioCyc" id="HINF71421:G1GJ1-1388-MONOMER"/>
<dbReference type="Proteomes" id="UP000000579">
    <property type="component" value="Chromosome"/>
</dbReference>
<dbReference type="GO" id="GO:0005886">
    <property type="term" value="C:plasma membrane"/>
    <property type="evidence" value="ECO:0007669"/>
    <property type="project" value="UniProtKB-SubCell"/>
</dbReference>
<dbReference type="GO" id="GO:0050661">
    <property type="term" value="F:NADP binding"/>
    <property type="evidence" value="ECO:0007669"/>
    <property type="project" value="InterPro"/>
</dbReference>
<dbReference type="GO" id="GO:0008750">
    <property type="term" value="F:proton-translocating NAD(P)+ transhydrogenase activity"/>
    <property type="evidence" value="ECO:0007669"/>
    <property type="project" value="UniProtKB-EC"/>
</dbReference>
<dbReference type="FunFam" id="3.40.50.1220:FF:000002">
    <property type="entry name" value="NAD(P) transhydrogenase subunit beta"/>
    <property type="match status" value="1"/>
</dbReference>
<dbReference type="Gene3D" id="3.40.50.1220">
    <property type="entry name" value="TPP-binding domain"/>
    <property type="match status" value="1"/>
</dbReference>
<dbReference type="InterPro" id="IPR029035">
    <property type="entry name" value="DHS-like_NAD/FAD-binding_dom"/>
</dbReference>
<dbReference type="InterPro" id="IPR012136">
    <property type="entry name" value="NADH_DH_b"/>
</dbReference>
<dbReference type="InterPro" id="IPR034300">
    <property type="entry name" value="PNTB-like"/>
</dbReference>
<dbReference type="NCBIfam" id="NF006974">
    <property type="entry name" value="PRK09444.1"/>
    <property type="match status" value="1"/>
</dbReference>
<dbReference type="PANTHER" id="PTHR44758">
    <property type="entry name" value="NAD(P) TRANSHYDROGENASE SUBUNIT BETA"/>
    <property type="match status" value="1"/>
</dbReference>
<dbReference type="PANTHER" id="PTHR44758:SF1">
    <property type="entry name" value="NAD(P) TRANSHYDROGENASE SUBUNIT BETA"/>
    <property type="match status" value="1"/>
</dbReference>
<dbReference type="Pfam" id="PF02233">
    <property type="entry name" value="PNTB"/>
    <property type="match status" value="1"/>
</dbReference>
<dbReference type="PIRSF" id="PIRSF000204">
    <property type="entry name" value="PNTB"/>
    <property type="match status" value="1"/>
</dbReference>
<dbReference type="SUPFAM" id="SSF52467">
    <property type="entry name" value="DHS-like NAD/FAD-binding domain"/>
    <property type="match status" value="1"/>
</dbReference>
<name>PNTB_HAEIN</name>
<gene>
    <name type="primary">pntB</name>
    <name type="ordered locus">HI_1363</name>
</gene>
<organism>
    <name type="scientific">Haemophilus influenzae (strain ATCC 51907 / DSM 11121 / KW20 / Rd)</name>
    <dbReference type="NCBI Taxonomy" id="71421"/>
    <lineage>
        <taxon>Bacteria</taxon>
        <taxon>Pseudomonadati</taxon>
        <taxon>Pseudomonadota</taxon>
        <taxon>Gammaproteobacteria</taxon>
        <taxon>Pasteurellales</taxon>
        <taxon>Pasteurellaceae</taxon>
        <taxon>Haemophilus</taxon>
    </lineage>
</organism>
<keyword id="KW-0997">Cell inner membrane</keyword>
<keyword id="KW-1003">Cell membrane</keyword>
<keyword id="KW-0472">Membrane</keyword>
<keyword id="KW-0520">NAD</keyword>
<keyword id="KW-0521">NADP</keyword>
<keyword id="KW-1185">Reference proteome</keyword>
<keyword id="KW-1278">Translocase</keyword>
<keyword id="KW-0812">Transmembrane</keyword>
<keyword id="KW-1133">Transmembrane helix</keyword>
<accession>P43010</accession>
<feature type="chain" id="PRO_0000199026" description="NAD(P) transhydrogenase subunit beta">
    <location>
        <begin position="1"/>
        <end position="474"/>
    </location>
</feature>
<feature type="transmembrane region" description="Helical" evidence="2">
    <location>
        <begin position="4"/>
        <end position="24"/>
    </location>
</feature>
<feature type="transmembrane region" description="Helical" evidence="2">
    <location>
        <begin position="46"/>
        <end position="66"/>
    </location>
</feature>
<feature type="transmembrane region" description="Helical" evidence="2">
    <location>
        <begin position="83"/>
        <end position="103"/>
    </location>
</feature>
<feature type="transmembrane region" description="Helical" evidence="2">
    <location>
        <begin position="132"/>
        <end position="152"/>
    </location>
</feature>
<feature type="transmembrane region" description="Helical" evidence="2">
    <location>
        <begin position="181"/>
        <end position="200"/>
    </location>
</feature>
<feature type="transmembrane region" description="Helical" evidence="2">
    <location>
        <begin position="202"/>
        <end position="222"/>
    </location>
</feature>
<feature type="transmembrane region" description="Helical" evidence="2">
    <location>
        <begin position="229"/>
        <end position="249"/>
    </location>
</feature>
<feature type="transmembrane region" description="Helical" evidence="2">
    <location>
        <begin position="253"/>
        <end position="273"/>
    </location>
</feature>
<feature type="transmembrane region" description="Helical" evidence="2">
    <location>
        <begin position="321"/>
        <end position="341"/>
    </location>
</feature>
<feature type="sequence conflict" description="In Ref. 2; AAC43725." evidence="3" ref="2">
    <original>A</original>
    <variation>P</variation>
    <location>
        <position position="343"/>
    </location>
</feature>
<comment type="function">
    <text evidence="1">The transhydrogenation between NADH and NADP is coupled to respiration and ATP hydrolysis and functions as a proton pump across the membrane.</text>
</comment>
<comment type="catalytic activity">
    <reaction>
        <text>NAD(+) + NADPH + H(+)(in) = NADH + NADP(+) + H(+)(out)</text>
        <dbReference type="Rhea" id="RHEA:47992"/>
        <dbReference type="ChEBI" id="CHEBI:15378"/>
        <dbReference type="ChEBI" id="CHEBI:57540"/>
        <dbReference type="ChEBI" id="CHEBI:57783"/>
        <dbReference type="ChEBI" id="CHEBI:57945"/>
        <dbReference type="ChEBI" id="CHEBI:58349"/>
        <dbReference type="EC" id="7.1.1.1"/>
    </reaction>
</comment>
<comment type="subunit">
    <text evidence="1">Heterodimer of an alpha and a beta chain.</text>
</comment>
<comment type="subcellular location">
    <subcellularLocation>
        <location evidence="1">Cell inner membrane</location>
        <topology evidence="1">Multi-pass membrane protein</topology>
    </subcellularLocation>
</comment>
<comment type="similarity">
    <text evidence="3">Belongs to the PNT beta subunit family.</text>
</comment>
<sequence>MSEGLVQAAYILAALLFIMSLAGLSKHETAKAGCWFGIVGMTIALIATIFGPHSEGTFWIIIAMIIGGAIGVQRALKVEMTEMPELVAILHSFVGLAAVLVGFNSYGLHHEALMPEGLDAAAQAAFVAEQAVLTNIHNVEVFLGIFIGAVTFTGSVVAFGKLSGKINSKALMLPHRHKLNLAALVVSALLMVAFLNNPESIFPVLLMTAIALAFGWHLVASIGGADMPVVVSMLNSYSGWAAAAAGFILNNDLLIVTGALVGSSGAILSYIMCKAMNRSFVSVIAGGFGNDVQVSSSEEQGEHRETTAEEVAELLKNASSVIITPGYGMAVAQAQYPVADITAKLRERGVNVRFGIHPVAGRLPGHMNVLLAEAKVPYDVVLEMDEINDDFADTDVVLVIGANDTVNPAAMEDPNSPIAGMPVLEVWKAQNVIVFKRSMAVGYAGVQNPLFFKENTQMLFGDAKDRVEDILKAL</sequence>